<proteinExistence type="inferred from homology"/>
<sequence>MKAGTLTLLIALCLPISVSATTLRLSSEVDLLVLDGKKVSSSLLRGADSIELENGPHQLVFRVEKTIQMPGHGERLYISPPLVASFNTQLISQVNFRLPSLLNEQETAHFDAAPRLELLDGDAMPIPVKLDILAITSVAKPIDYEGEVERYNKSAKRASLPQFATMMADDSTLLSGVSELDAIPPQSQVLTEQRLKYWFKQADPQTRNNFLQWAEKQPSS</sequence>
<evidence type="ECO:0000255" key="1">
    <source>
        <dbReference type="HAMAP-Rule" id="MF_00789"/>
    </source>
</evidence>
<protein>
    <recommendedName>
        <fullName evidence="1">UPF0319 protein YccT</fullName>
    </recommendedName>
</protein>
<comment type="similarity">
    <text evidence="1">Belongs to the UPF0319 family.</text>
</comment>
<organism>
    <name type="scientific">Escherichia fergusonii (strain ATCC 35469 / DSM 13698 / CCUG 18766 / IAM 14443 / JCM 21226 / LMG 7866 / NBRC 102419 / NCTC 12128 / CDC 0568-73)</name>
    <dbReference type="NCBI Taxonomy" id="585054"/>
    <lineage>
        <taxon>Bacteria</taxon>
        <taxon>Pseudomonadati</taxon>
        <taxon>Pseudomonadota</taxon>
        <taxon>Gammaproteobacteria</taxon>
        <taxon>Enterobacterales</taxon>
        <taxon>Enterobacteriaceae</taxon>
        <taxon>Escherichia</taxon>
    </lineage>
</organism>
<reference key="1">
    <citation type="journal article" date="2009" name="PLoS Genet.">
        <title>Organised genome dynamics in the Escherichia coli species results in highly diverse adaptive paths.</title>
        <authorList>
            <person name="Touchon M."/>
            <person name="Hoede C."/>
            <person name="Tenaillon O."/>
            <person name="Barbe V."/>
            <person name="Baeriswyl S."/>
            <person name="Bidet P."/>
            <person name="Bingen E."/>
            <person name="Bonacorsi S."/>
            <person name="Bouchier C."/>
            <person name="Bouvet O."/>
            <person name="Calteau A."/>
            <person name="Chiapello H."/>
            <person name="Clermont O."/>
            <person name="Cruveiller S."/>
            <person name="Danchin A."/>
            <person name="Diard M."/>
            <person name="Dossat C."/>
            <person name="Karoui M.E."/>
            <person name="Frapy E."/>
            <person name="Garry L."/>
            <person name="Ghigo J.M."/>
            <person name="Gilles A.M."/>
            <person name="Johnson J."/>
            <person name="Le Bouguenec C."/>
            <person name="Lescat M."/>
            <person name="Mangenot S."/>
            <person name="Martinez-Jehanne V."/>
            <person name="Matic I."/>
            <person name="Nassif X."/>
            <person name="Oztas S."/>
            <person name="Petit M.A."/>
            <person name="Pichon C."/>
            <person name="Rouy Z."/>
            <person name="Ruf C.S."/>
            <person name="Schneider D."/>
            <person name="Tourret J."/>
            <person name="Vacherie B."/>
            <person name="Vallenet D."/>
            <person name="Medigue C."/>
            <person name="Rocha E.P.C."/>
            <person name="Denamur E."/>
        </authorList>
    </citation>
    <scope>NUCLEOTIDE SEQUENCE [LARGE SCALE GENOMIC DNA]</scope>
    <source>
        <strain>ATCC 35469 / DSM 13698 / BCRC 15582 / CCUG 18766 / IAM 14443 / JCM 21226 / LMG 7866 / NBRC 102419 / NCTC 12128 / CDC 0568-73</strain>
    </source>
</reference>
<dbReference type="EMBL" id="CU928158">
    <property type="protein sequence ID" value="CAQ88630.1"/>
    <property type="molecule type" value="Genomic_DNA"/>
</dbReference>
<dbReference type="RefSeq" id="WP_000643580.1">
    <property type="nucleotide sequence ID" value="NC_011740.1"/>
</dbReference>
<dbReference type="KEGG" id="efe:EFER_1101"/>
<dbReference type="HOGENOM" id="CLU_073782_2_0_6"/>
<dbReference type="OrthoDB" id="6428208at2"/>
<dbReference type="Proteomes" id="UP000000745">
    <property type="component" value="Chromosome"/>
</dbReference>
<dbReference type="HAMAP" id="MF_00789">
    <property type="entry name" value="UPF0319"/>
    <property type="match status" value="1"/>
</dbReference>
<dbReference type="InterPro" id="IPR018635">
    <property type="entry name" value="UPF0319"/>
</dbReference>
<dbReference type="NCBIfam" id="NF047712">
    <property type="entry name" value="CrliSynInhib"/>
    <property type="match status" value="1"/>
</dbReference>
<dbReference type="NCBIfam" id="NF002967">
    <property type="entry name" value="PRK03641.1"/>
    <property type="match status" value="1"/>
</dbReference>
<dbReference type="PANTHER" id="PTHR38108">
    <property type="entry name" value="UPF0319 PROTEIN YCCT"/>
    <property type="match status" value="1"/>
</dbReference>
<dbReference type="PANTHER" id="PTHR38108:SF1">
    <property type="entry name" value="UPF0319 PROTEIN YCCT"/>
    <property type="match status" value="1"/>
</dbReference>
<dbReference type="Pfam" id="PF09829">
    <property type="entry name" value="DUF2057"/>
    <property type="match status" value="1"/>
</dbReference>
<name>YCCT_ESCF3</name>
<keyword id="KW-0732">Signal</keyword>
<gene>
    <name evidence="1" type="primary">yccT</name>
    <name type="ordered locus">EFER_1101</name>
</gene>
<accession>B7LNX4</accession>
<feature type="signal peptide" evidence="1">
    <location>
        <begin position="1"/>
        <end position="20"/>
    </location>
</feature>
<feature type="chain" id="PRO_1000200491" description="UPF0319 protein YccT">
    <location>
        <begin position="21"/>
        <end position="220"/>
    </location>
</feature>